<evidence type="ECO:0000255" key="1">
    <source>
        <dbReference type="HAMAP-Rule" id="MF_01398"/>
    </source>
</evidence>
<gene>
    <name evidence="1" type="primary">atpF1</name>
    <name type="ordered locus">Bind_0740</name>
</gene>
<organism>
    <name type="scientific">Beijerinckia indica subsp. indica (strain ATCC 9039 / DSM 1715 / NCIMB 8712)</name>
    <dbReference type="NCBI Taxonomy" id="395963"/>
    <lineage>
        <taxon>Bacteria</taxon>
        <taxon>Pseudomonadati</taxon>
        <taxon>Pseudomonadota</taxon>
        <taxon>Alphaproteobacteria</taxon>
        <taxon>Hyphomicrobiales</taxon>
        <taxon>Beijerinckiaceae</taxon>
        <taxon>Beijerinckia</taxon>
    </lineage>
</organism>
<accession>B2IGK8</accession>
<feature type="chain" id="PRO_0000368350" description="ATP synthase subunit b 1">
    <location>
        <begin position="1"/>
        <end position="161"/>
    </location>
</feature>
<feature type="transmembrane region" description="Helical" evidence="1">
    <location>
        <begin position="6"/>
        <end position="26"/>
    </location>
</feature>
<proteinExistence type="inferred from homology"/>
<dbReference type="EMBL" id="CP001016">
    <property type="protein sequence ID" value="ACB94390.1"/>
    <property type="molecule type" value="Genomic_DNA"/>
</dbReference>
<dbReference type="RefSeq" id="WP_012383747.1">
    <property type="nucleotide sequence ID" value="NC_010581.1"/>
</dbReference>
<dbReference type="SMR" id="B2IGK8"/>
<dbReference type="STRING" id="395963.Bind_0740"/>
<dbReference type="KEGG" id="bid:Bind_0740"/>
<dbReference type="eggNOG" id="COG0711">
    <property type="taxonomic scope" value="Bacteria"/>
</dbReference>
<dbReference type="HOGENOM" id="CLU_079215_6_1_5"/>
<dbReference type="OrthoDB" id="8479836at2"/>
<dbReference type="Proteomes" id="UP000001695">
    <property type="component" value="Chromosome"/>
</dbReference>
<dbReference type="GO" id="GO:0005886">
    <property type="term" value="C:plasma membrane"/>
    <property type="evidence" value="ECO:0007669"/>
    <property type="project" value="UniProtKB-SubCell"/>
</dbReference>
<dbReference type="GO" id="GO:0045259">
    <property type="term" value="C:proton-transporting ATP synthase complex"/>
    <property type="evidence" value="ECO:0007669"/>
    <property type="project" value="UniProtKB-KW"/>
</dbReference>
<dbReference type="GO" id="GO:0046933">
    <property type="term" value="F:proton-transporting ATP synthase activity, rotational mechanism"/>
    <property type="evidence" value="ECO:0007669"/>
    <property type="project" value="UniProtKB-UniRule"/>
</dbReference>
<dbReference type="GO" id="GO:0046961">
    <property type="term" value="F:proton-transporting ATPase activity, rotational mechanism"/>
    <property type="evidence" value="ECO:0007669"/>
    <property type="project" value="TreeGrafter"/>
</dbReference>
<dbReference type="CDD" id="cd06503">
    <property type="entry name" value="ATP-synt_Fo_b"/>
    <property type="match status" value="1"/>
</dbReference>
<dbReference type="HAMAP" id="MF_01398">
    <property type="entry name" value="ATP_synth_b_bprime"/>
    <property type="match status" value="1"/>
</dbReference>
<dbReference type="InterPro" id="IPR002146">
    <property type="entry name" value="ATP_synth_b/b'su_bac/chlpt"/>
</dbReference>
<dbReference type="InterPro" id="IPR050059">
    <property type="entry name" value="ATP_synthase_B_chain"/>
</dbReference>
<dbReference type="PANTHER" id="PTHR33445:SF1">
    <property type="entry name" value="ATP SYNTHASE SUBUNIT B"/>
    <property type="match status" value="1"/>
</dbReference>
<dbReference type="PANTHER" id="PTHR33445">
    <property type="entry name" value="ATP SYNTHASE SUBUNIT B', CHLOROPLASTIC"/>
    <property type="match status" value="1"/>
</dbReference>
<dbReference type="Pfam" id="PF00430">
    <property type="entry name" value="ATP-synt_B"/>
    <property type="match status" value="1"/>
</dbReference>
<sequence length="161" mass="17580">MEFNEEFYVALGFVIFVAILLYYGVHNKLNAALDKRADRIREDLAHAVRLREEAAALLASFEKRKAEAEAEAEALVAQARTEAEMIAKEAHERLAEFVQRRTQQAENKIANAEAQAMAEVKAIAADAATKAAEILLTDAAKGAYGQKLIDQGIDGLKAAAH</sequence>
<comment type="function">
    <text evidence="1">F(1)F(0) ATP synthase produces ATP from ADP in the presence of a proton or sodium gradient. F-type ATPases consist of two structural domains, F(1) containing the extramembraneous catalytic core and F(0) containing the membrane proton channel, linked together by a central stalk and a peripheral stalk. During catalysis, ATP synthesis in the catalytic domain of F(1) is coupled via a rotary mechanism of the central stalk subunits to proton translocation.</text>
</comment>
<comment type="function">
    <text evidence="1">Component of the F(0) channel, it forms part of the peripheral stalk, linking F(1) to F(0).</text>
</comment>
<comment type="subunit">
    <text evidence="1">F-type ATPases have 2 components, F(1) - the catalytic core - and F(0) - the membrane proton channel. F(1) has five subunits: alpha(3), beta(3), gamma(1), delta(1), epsilon(1). F(0) has three main subunits: a(1), b(2) and c(10-14). The alpha and beta chains form an alternating ring which encloses part of the gamma chain. F(1) is attached to F(0) by a central stalk formed by the gamma and epsilon chains, while a peripheral stalk is formed by the delta and b chains.</text>
</comment>
<comment type="subcellular location">
    <subcellularLocation>
        <location evidence="1">Cell inner membrane</location>
        <topology evidence="1">Single-pass membrane protein</topology>
    </subcellularLocation>
</comment>
<comment type="similarity">
    <text evidence="1">Belongs to the ATPase B chain family.</text>
</comment>
<protein>
    <recommendedName>
        <fullName evidence="1">ATP synthase subunit b 1</fullName>
    </recommendedName>
    <alternativeName>
        <fullName evidence="1">ATP synthase F(0) sector subunit b 1</fullName>
    </alternativeName>
    <alternativeName>
        <fullName evidence="1">ATPase subunit I 1</fullName>
    </alternativeName>
    <alternativeName>
        <fullName evidence="1">F-type ATPase subunit b 1</fullName>
        <shortName evidence="1">F-ATPase subunit b 1</shortName>
    </alternativeName>
</protein>
<reference key="1">
    <citation type="journal article" date="2010" name="J. Bacteriol.">
        <title>Complete genome sequence of Beijerinckia indica subsp. indica.</title>
        <authorList>
            <person name="Tamas I."/>
            <person name="Dedysh S.N."/>
            <person name="Liesack W."/>
            <person name="Stott M.B."/>
            <person name="Alam M."/>
            <person name="Murrell J.C."/>
            <person name="Dunfield P.F."/>
        </authorList>
    </citation>
    <scope>NUCLEOTIDE SEQUENCE [LARGE SCALE GENOMIC DNA]</scope>
    <source>
        <strain>ATCC 9039 / DSM 1715 / NCIMB 8712</strain>
    </source>
</reference>
<name>ATPF1_BEII9</name>
<keyword id="KW-0066">ATP synthesis</keyword>
<keyword id="KW-0997">Cell inner membrane</keyword>
<keyword id="KW-1003">Cell membrane</keyword>
<keyword id="KW-0138">CF(0)</keyword>
<keyword id="KW-0375">Hydrogen ion transport</keyword>
<keyword id="KW-0406">Ion transport</keyword>
<keyword id="KW-0472">Membrane</keyword>
<keyword id="KW-1185">Reference proteome</keyword>
<keyword id="KW-0812">Transmembrane</keyword>
<keyword id="KW-1133">Transmembrane helix</keyword>
<keyword id="KW-0813">Transport</keyword>